<dbReference type="EC" id="2.8.1.13" evidence="1"/>
<dbReference type="EMBL" id="CP000803">
    <property type="protein sequence ID" value="ABU60558.1"/>
    <property type="molecule type" value="Genomic_DNA"/>
</dbReference>
<dbReference type="RefSeq" id="WP_010032231.1">
    <property type="nucleotide sequence ID" value="NC_009749.1"/>
</dbReference>
<dbReference type="SMR" id="A7N9A5"/>
<dbReference type="KEGG" id="fta:FTA_0080"/>
<dbReference type="HOGENOM" id="CLU_035188_1_0_6"/>
<dbReference type="GO" id="GO:0005737">
    <property type="term" value="C:cytoplasm"/>
    <property type="evidence" value="ECO:0007669"/>
    <property type="project" value="UniProtKB-SubCell"/>
</dbReference>
<dbReference type="GO" id="GO:0005524">
    <property type="term" value="F:ATP binding"/>
    <property type="evidence" value="ECO:0007669"/>
    <property type="project" value="UniProtKB-KW"/>
</dbReference>
<dbReference type="GO" id="GO:0000049">
    <property type="term" value="F:tRNA binding"/>
    <property type="evidence" value="ECO:0007669"/>
    <property type="project" value="UniProtKB-KW"/>
</dbReference>
<dbReference type="GO" id="GO:0103016">
    <property type="term" value="F:tRNA-uridine 2-sulfurtransferase activity"/>
    <property type="evidence" value="ECO:0007669"/>
    <property type="project" value="UniProtKB-EC"/>
</dbReference>
<dbReference type="GO" id="GO:0002143">
    <property type="term" value="P:tRNA wobble position uridine thiolation"/>
    <property type="evidence" value="ECO:0007669"/>
    <property type="project" value="TreeGrafter"/>
</dbReference>
<dbReference type="CDD" id="cd01998">
    <property type="entry name" value="MnmA_TRMU-like"/>
    <property type="match status" value="1"/>
</dbReference>
<dbReference type="FunFam" id="2.30.30.280:FF:000001">
    <property type="entry name" value="tRNA-specific 2-thiouridylase MnmA"/>
    <property type="match status" value="1"/>
</dbReference>
<dbReference type="FunFam" id="2.40.30.10:FF:000023">
    <property type="entry name" value="tRNA-specific 2-thiouridylase MnmA"/>
    <property type="match status" value="1"/>
</dbReference>
<dbReference type="FunFam" id="3.40.50.620:FF:000004">
    <property type="entry name" value="tRNA-specific 2-thiouridylase MnmA"/>
    <property type="match status" value="1"/>
</dbReference>
<dbReference type="Gene3D" id="2.30.30.280">
    <property type="entry name" value="Adenine nucleotide alpha hydrolases-like domains"/>
    <property type="match status" value="1"/>
</dbReference>
<dbReference type="Gene3D" id="3.40.50.620">
    <property type="entry name" value="HUPs"/>
    <property type="match status" value="1"/>
</dbReference>
<dbReference type="Gene3D" id="2.40.30.10">
    <property type="entry name" value="Translation factors"/>
    <property type="match status" value="1"/>
</dbReference>
<dbReference type="HAMAP" id="MF_00144">
    <property type="entry name" value="tRNA_thiouridyl_MnmA"/>
    <property type="match status" value="1"/>
</dbReference>
<dbReference type="InterPro" id="IPR004506">
    <property type="entry name" value="MnmA-like"/>
</dbReference>
<dbReference type="InterPro" id="IPR046885">
    <property type="entry name" value="MnmA-like_C"/>
</dbReference>
<dbReference type="InterPro" id="IPR046884">
    <property type="entry name" value="MnmA-like_central"/>
</dbReference>
<dbReference type="InterPro" id="IPR023382">
    <property type="entry name" value="MnmA-like_central_sf"/>
</dbReference>
<dbReference type="InterPro" id="IPR014729">
    <property type="entry name" value="Rossmann-like_a/b/a_fold"/>
</dbReference>
<dbReference type="NCBIfam" id="NF001138">
    <property type="entry name" value="PRK00143.1"/>
    <property type="match status" value="1"/>
</dbReference>
<dbReference type="NCBIfam" id="TIGR00420">
    <property type="entry name" value="trmU"/>
    <property type="match status" value="1"/>
</dbReference>
<dbReference type="PANTHER" id="PTHR11933:SF5">
    <property type="entry name" value="MITOCHONDRIAL TRNA-SPECIFIC 2-THIOURIDYLASE 1"/>
    <property type="match status" value="1"/>
</dbReference>
<dbReference type="PANTHER" id="PTHR11933">
    <property type="entry name" value="TRNA 5-METHYLAMINOMETHYL-2-THIOURIDYLATE -METHYLTRANSFERASE"/>
    <property type="match status" value="1"/>
</dbReference>
<dbReference type="Pfam" id="PF03054">
    <property type="entry name" value="tRNA_Me_trans"/>
    <property type="match status" value="1"/>
</dbReference>
<dbReference type="Pfam" id="PF20258">
    <property type="entry name" value="tRNA_Me_trans_C"/>
    <property type="match status" value="1"/>
</dbReference>
<dbReference type="Pfam" id="PF20259">
    <property type="entry name" value="tRNA_Me_trans_M"/>
    <property type="match status" value="1"/>
</dbReference>
<dbReference type="SUPFAM" id="SSF52402">
    <property type="entry name" value="Adenine nucleotide alpha hydrolases-like"/>
    <property type="match status" value="1"/>
</dbReference>
<feature type="chain" id="PRO_1000009524" description="tRNA-specific 2-thiouridylase MnmA">
    <location>
        <begin position="1"/>
        <end position="359"/>
    </location>
</feature>
<feature type="region of interest" description="Interaction with target base in tRNA" evidence="1">
    <location>
        <begin position="95"/>
        <end position="97"/>
    </location>
</feature>
<feature type="region of interest" description="Interaction with tRNA" evidence="1">
    <location>
        <begin position="147"/>
        <end position="149"/>
    </location>
</feature>
<feature type="region of interest" description="Interaction with tRNA" evidence="1">
    <location>
        <begin position="309"/>
        <end position="310"/>
    </location>
</feature>
<feature type="active site" description="Nucleophile" evidence="1">
    <location>
        <position position="100"/>
    </location>
</feature>
<feature type="active site" description="Cysteine persulfide intermediate" evidence="1">
    <location>
        <position position="197"/>
    </location>
</feature>
<feature type="binding site" evidence="1">
    <location>
        <begin position="9"/>
        <end position="16"/>
    </location>
    <ligand>
        <name>ATP</name>
        <dbReference type="ChEBI" id="CHEBI:30616"/>
    </ligand>
</feature>
<feature type="binding site" evidence="1">
    <location>
        <position position="35"/>
    </location>
    <ligand>
        <name>ATP</name>
        <dbReference type="ChEBI" id="CHEBI:30616"/>
    </ligand>
</feature>
<feature type="binding site" evidence="1">
    <location>
        <position position="124"/>
    </location>
    <ligand>
        <name>ATP</name>
        <dbReference type="ChEBI" id="CHEBI:30616"/>
    </ligand>
</feature>
<feature type="site" description="Interaction with tRNA" evidence="1">
    <location>
        <position position="125"/>
    </location>
</feature>
<feature type="site" description="Interaction with tRNA" evidence="1">
    <location>
        <position position="342"/>
    </location>
</feature>
<feature type="disulfide bond" description="Alternate" evidence="1">
    <location>
        <begin position="100"/>
        <end position="197"/>
    </location>
</feature>
<proteinExistence type="inferred from homology"/>
<accession>A7N9A5</accession>
<gene>
    <name evidence="1" type="primary">mnmA</name>
    <name type="synonym">trmU</name>
    <name type="ordered locus">FTA_0080</name>
</gene>
<evidence type="ECO:0000255" key="1">
    <source>
        <dbReference type="HAMAP-Rule" id="MF_00144"/>
    </source>
</evidence>
<keyword id="KW-0067">ATP-binding</keyword>
<keyword id="KW-0963">Cytoplasm</keyword>
<keyword id="KW-1015">Disulfide bond</keyword>
<keyword id="KW-0547">Nucleotide-binding</keyword>
<keyword id="KW-0694">RNA-binding</keyword>
<keyword id="KW-0808">Transferase</keyword>
<keyword id="KW-0819">tRNA processing</keyword>
<keyword id="KW-0820">tRNA-binding</keyword>
<name>MNMA_FRATF</name>
<protein>
    <recommendedName>
        <fullName evidence="1">tRNA-specific 2-thiouridylase MnmA</fullName>
        <ecNumber evidence="1">2.8.1.13</ecNumber>
    </recommendedName>
</protein>
<sequence>MENKKVIVGISGGVDSSVSALLLKQQGYDVTGVFMKNWEEDDTDEFCSAEQDIADAQAVCDSIGIPFKKINFTAEYWDNVFEHFLIEYKAGRTPNPDILCNKEIKFKAFLSYVHLLGGDYIATGHYAQTRLAADGSVQLVKGLDDNKDQTYFLYTLGQEQLRQTIFPIGNIEKSKVREIAKENNLVTFDKKDSTGICFIGERKFKEFLSKYLPAQKGEIHDENGIKIGMHDGLMYYTIGQRQGLGIGGVKDRPEVPWFAAKKDLENNVLIAVQGHDHPLLFKQSLQAIELSWVAGMAPADKFRCAAKVRYRQKDQSCEVEVNQDGSVNVTFDQPQRAITPGQSVVFYIDDVCLGGGVII</sequence>
<reference key="1">
    <citation type="journal article" date="2009" name="PLoS ONE">
        <title>Complete genome sequence of Francisella tularensis subspecies holarctica FTNF002-00.</title>
        <authorList>
            <person name="Barabote R.D."/>
            <person name="Xie G."/>
            <person name="Brettin T.S."/>
            <person name="Hinrichs S.H."/>
            <person name="Fey P.D."/>
            <person name="Jay J.J."/>
            <person name="Engle J.L."/>
            <person name="Godbole S.D."/>
            <person name="Noronha J.M."/>
            <person name="Scheuermann R.H."/>
            <person name="Zhou L.W."/>
            <person name="Lion C."/>
            <person name="Dempsey M.P."/>
        </authorList>
    </citation>
    <scope>NUCLEOTIDE SEQUENCE [LARGE SCALE GENOMIC DNA]</scope>
    <source>
        <strain>FTNF002-00 / FTA</strain>
    </source>
</reference>
<comment type="function">
    <text evidence="1">Catalyzes the 2-thiolation of uridine at the wobble position (U34) of tRNA, leading to the formation of s(2)U34.</text>
</comment>
<comment type="catalytic activity">
    <reaction evidence="1">
        <text>S-sulfanyl-L-cysteinyl-[protein] + uridine(34) in tRNA + AH2 + ATP = 2-thiouridine(34) in tRNA + L-cysteinyl-[protein] + A + AMP + diphosphate + H(+)</text>
        <dbReference type="Rhea" id="RHEA:47032"/>
        <dbReference type="Rhea" id="RHEA-COMP:10131"/>
        <dbReference type="Rhea" id="RHEA-COMP:11726"/>
        <dbReference type="Rhea" id="RHEA-COMP:11727"/>
        <dbReference type="Rhea" id="RHEA-COMP:11728"/>
        <dbReference type="ChEBI" id="CHEBI:13193"/>
        <dbReference type="ChEBI" id="CHEBI:15378"/>
        <dbReference type="ChEBI" id="CHEBI:17499"/>
        <dbReference type="ChEBI" id="CHEBI:29950"/>
        <dbReference type="ChEBI" id="CHEBI:30616"/>
        <dbReference type="ChEBI" id="CHEBI:33019"/>
        <dbReference type="ChEBI" id="CHEBI:61963"/>
        <dbReference type="ChEBI" id="CHEBI:65315"/>
        <dbReference type="ChEBI" id="CHEBI:87170"/>
        <dbReference type="ChEBI" id="CHEBI:456215"/>
        <dbReference type="EC" id="2.8.1.13"/>
    </reaction>
</comment>
<comment type="subcellular location">
    <subcellularLocation>
        <location evidence="1">Cytoplasm</location>
    </subcellularLocation>
</comment>
<comment type="similarity">
    <text evidence="1">Belongs to the MnmA/TRMU family.</text>
</comment>
<organism>
    <name type="scientific">Francisella tularensis subsp. holarctica (strain FTNF002-00 / FTA)</name>
    <dbReference type="NCBI Taxonomy" id="458234"/>
    <lineage>
        <taxon>Bacteria</taxon>
        <taxon>Pseudomonadati</taxon>
        <taxon>Pseudomonadota</taxon>
        <taxon>Gammaproteobacteria</taxon>
        <taxon>Thiotrichales</taxon>
        <taxon>Francisellaceae</taxon>
        <taxon>Francisella</taxon>
    </lineage>
</organism>